<organism>
    <name type="scientific">Meyerozyma guilliermondii (strain ATCC 6260 / CBS 566 / DSM 6381 / JCM 1539 / NBRC 10279 / NRRL Y-324)</name>
    <name type="common">Yeast</name>
    <name type="synonym">Candida guilliermondii</name>
    <dbReference type="NCBI Taxonomy" id="294746"/>
    <lineage>
        <taxon>Eukaryota</taxon>
        <taxon>Fungi</taxon>
        <taxon>Dikarya</taxon>
        <taxon>Ascomycota</taxon>
        <taxon>Saccharomycotina</taxon>
        <taxon>Pichiomycetes</taxon>
        <taxon>Debaryomycetaceae</taxon>
        <taxon>Meyerozyma</taxon>
    </lineage>
</organism>
<comment type="function">
    <text evidence="1">Component of the eukaryotic translation initiation factor 3 (eIF-3) complex, which is involved in protein synthesis of a specialized repertoire of mRNAs and, together with other initiation factors, stimulates binding of mRNA and methionyl-tRNAi to the 40S ribosome. The eIF-3 complex specifically targets and initiates translation of a subset of mRNAs involved in cell proliferation.</text>
</comment>
<comment type="subunit">
    <text evidence="1">Component of the eukaryotic translation initiation factor 3 (eIF-3) complex.</text>
</comment>
<comment type="subcellular location">
    <subcellularLocation>
        <location evidence="1">Cytoplasm</location>
    </subcellularLocation>
</comment>
<comment type="similarity">
    <text evidence="1">Belongs to the eIF-3 subunit I family.</text>
</comment>
<reference key="1">
    <citation type="journal article" date="2009" name="Nature">
        <title>Evolution of pathogenicity and sexual reproduction in eight Candida genomes.</title>
        <authorList>
            <person name="Butler G."/>
            <person name="Rasmussen M.D."/>
            <person name="Lin M.F."/>
            <person name="Santos M.A.S."/>
            <person name="Sakthikumar S."/>
            <person name="Munro C.A."/>
            <person name="Rheinbay E."/>
            <person name="Grabherr M."/>
            <person name="Forche A."/>
            <person name="Reedy J.L."/>
            <person name="Agrafioti I."/>
            <person name="Arnaud M.B."/>
            <person name="Bates S."/>
            <person name="Brown A.J.P."/>
            <person name="Brunke S."/>
            <person name="Costanzo M.C."/>
            <person name="Fitzpatrick D.A."/>
            <person name="de Groot P.W.J."/>
            <person name="Harris D."/>
            <person name="Hoyer L.L."/>
            <person name="Hube B."/>
            <person name="Klis F.M."/>
            <person name="Kodira C."/>
            <person name="Lennard N."/>
            <person name="Logue M.E."/>
            <person name="Martin R."/>
            <person name="Neiman A.M."/>
            <person name="Nikolaou E."/>
            <person name="Quail M.A."/>
            <person name="Quinn J."/>
            <person name="Santos M.C."/>
            <person name="Schmitzberger F.F."/>
            <person name="Sherlock G."/>
            <person name="Shah P."/>
            <person name="Silverstein K.A.T."/>
            <person name="Skrzypek M.S."/>
            <person name="Soll D."/>
            <person name="Staggs R."/>
            <person name="Stansfield I."/>
            <person name="Stumpf M.P.H."/>
            <person name="Sudbery P.E."/>
            <person name="Srikantha T."/>
            <person name="Zeng Q."/>
            <person name="Berman J."/>
            <person name="Berriman M."/>
            <person name="Heitman J."/>
            <person name="Gow N.A.R."/>
            <person name="Lorenz M.C."/>
            <person name="Birren B.W."/>
            <person name="Kellis M."/>
            <person name="Cuomo C.A."/>
        </authorList>
    </citation>
    <scope>NUCLEOTIDE SEQUENCE [LARGE SCALE GENOMIC DNA]</scope>
    <source>
        <strain>ATCC 6260 / CBS 566 / DSM 6381 / JCM 1539 / NBRC 10279 / NRRL Y-324</strain>
    </source>
</reference>
<dbReference type="EMBL" id="CH408157">
    <property type="protein sequence ID" value="EDK38321.2"/>
    <property type="molecule type" value="Genomic_DNA"/>
</dbReference>
<dbReference type="RefSeq" id="XP_001484690.1">
    <property type="nucleotide sequence ID" value="XM_001484640.1"/>
</dbReference>
<dbReference type="SMR" id="A5DGL8"/>
<dbReference type="FunCoup" id="A5DGL8">
    <property type="interactions" value="1076"/>
</dbReference>
<dbReference type="STRING" id="294746.A5DGL8"/>
<dbReference type="GeneID" id="5126723"/>
<dbReference type="KEGG" id="pgu:PGUG_02419"/>
<dbReference type="VEuPathDB" id="FungiDB:PGUG_02419"/>
<dbReference type="eggNOG" id="KOG0643">
    <property type="taxonomic scope" value="Eukaryota"/>
</dbReference>
<dbReference type="HOGENOM" id="CLU_043845_0_1_1"/>
<dbReference type="InParanoid" id="A5DGL8"/>
<dbReference type="OMA" id="VWFSHNG"/>
<dbReference type="OrthoDB" id="24966at2759"/>
<dbReference type="Proteomes" id="UP000001997">
    <property type="component" value="Unassembled WGS sequence"/>
</dbReference>
<dbReference type="GO" id="GO:0016282">
    <property type="term" value="C:eukaryotic 43S preinitiation complex"/>
    <property type="evidence" value="ECO:0007669"/>
    <property type="project" value="UniProtKB-UniRule"/>
</dbReference>
<dbReference type="GO" id="GO:0033290">
    <property type="term" value="C:eukaryotic 48S preinitiation complex"/>
    <property type="evidence" value="ECO:0007669"/>
    <property type="project" value="UniProtKB-UniRule"/>
</dbReference>
<dbReference type="GO" id="GO:0071540">
    <property type="term" value="C:eukaryotic translation initiation factor 3 complex, eIF3e"/>
    <property type="evidence" value="ECO:0007669"/>
    <property type="project" value="EnsemblFungi"/>
</dbReference>
<dbReference type="GO" id="GO:0071541">
    <property type="term" value="C:eukaryotic translation initiation factor 3 complex, eIF3m"/>
    <property type="evidence" value="ECO:0007669"/>
    <property type="project" value="EnsemblFungi"/>
</dbReference>
<dbReference type="GO" id="GO:0034399">
    <property type="term" value="C:nuclear periphery"/>
    <property type="evidence" value="ECO:0007669"/>
    <property type="project" value="EnsemblFungi"/>
</dbReference>
<dbReference type="GO" id="GO:0003723">
    <property type="term" value="F:RNA binding"/>
    <property type="evidence" value="ECO:0007669"/>
    <property type="project" value="TreeGrafter"/>
</dbReference>
<dbReference type="GO" id="GO:0003743">
    <property type="term" value="F:translation initiation factor activity"/>
    <property type="evidence" value="ECO:0007669"/>
    <property type="project" value="UniProtKB-UniRule"/>
</dbReference>
<dbReference type="GO" id="GO:0001732">
    <property type="term" value="P:formation of cytoplasmic translation initiation complex"/>
    <property type="evidence" value="ECO:0007669"/>
    <property type="project" value="UniProtKB-UniRule"/>
</dbReference>
<dbReference type="FunFam" id="2.130.10.10:FF:000127">
    <property type="entry name" value="Eukaryotic translation initiation factor 3 subunit I"/>
    <property type="match status" value="1"/>
</dbReference>
<dbReference type="Gene3D" id="2.130.10.10">
    <property type="entry name" value="YVTN repeat-like/Quinoprotein amine dehydrogenase"/>
    <property type="match status" value="1"/>
</dbReference>
<dbReference type="HAMAP" id="MF_03008">
    <property type="entry name" value="eIF3i"/>
    <property type="match status" value="1"/>
</dbReference>
<dbReference type="InterPro" id="IPR027525">
    <property type="entry name" value="eIF3i"/>
</dbReference>
<dbReference type="InterPro" id="IPR015943">
    <property type="entry name" value="WD40/YVTN_repeat-like_dom_sf"/>
</dbReference>
<dbReference type="InterPro" id="IPR036322">
    <property type="entry name" value="WD40_repeat_dom_sf"/>
</dbReference>
<dbReference type="InterPro" id="IPR001680">
    <property type="entry name" value="WD40_rpt"/>
</dbReference>
<dbReference type="PANTHER" id="PTHR19877">
    <property type="entry name" value="EUKARYOTIC TRANSLATION INITIATION FACTOR 3 SUBUNIT I"/>
    <property type="match status" value="1"/>
</dbReference>
<dbReference type="PANTHER" id="PTHR19877:SF1">
    <property type="entry name" value="EUKARYOTIC TRANSLATION INITIATION FACTOR 3 SUBUNIT I"/>
    <property type="match status" value="1"/>
</dbReference>
<dbReference type="Pfam" id="PF24805">
    <property type="entry name" value="EIF3I"/>
    <property type="match status" value="1"/>
</dbReference>
<dbReference type="SMART" id="SM00320">
    <property type="entry name" value="WD40"/>
    <property type="match status" value="6"/>
</dbReference>
<dbReference type="SUPFAM" id="SSF50978">
    <property type="entry name" value="WD40 repeat-like"/>
    <property type="match status" value="1"/>
</dbReference>
<dbReference type="PROSITE" id="PS50082">
    <property type="entry name" value="WD_REPEATS_2"/>
    <property type="match status" value="3"/>
</dbReference>
<dbReference type="PROSITE" id="PS50294">
    <property type="entry name" value="WD_REPEATS_REGION"/>
    <property type="match status" value="1"/>
</dbReference>
<sequence>MRPFKLMGHERSLTQVKYNQEGDLLFSVAKDSSASVWFASNGERLGTFEGHMGTIWSIDVDSNTHYAVTGSADLTIKLWLVETGECVYTYEMPTPVRRVVFSPDNSKLLSVTDQVMGQVGTISVFDVNNEEPKNQSSKPSLVIPTRDGAKKVTIAGWSAGGKYIIAGHEDGLVSKYDGATGEFIDSVQAHGIHNEEKIHLVTDIQFAPEDKSYFITSSKDKCSCLIDVETLEIMKVYKADAPMNTAAITPLKDFVILGGGQEARNVTTTAESQGKFEARFYHKIFIDEIGRVKGHFGPLNTIAVHPDGTGYASGGEDGFIRLHSFDKSYYDFEYDAERTERAIAAGTT</sequence>
<protein>
    <recommendedName>
        <fullName evidence="1">Eukaryotic translation initiation factor 3 subunit I</fullName>
        <shortName evidence="1">eIF3i</shortName>
    </recommendedName>
    <alternativeName>
        <fullName evidence="1">Eukaryotic translation initiation factor 3 39 kDa subunit homolog</fullName>
        <shortName evidence="1">eIF-3 39 kDa subunit homolog</shortName>
    </alternativeName>
</protein>
<accession>A5DGL8</accession>
<proteinExistence type="inferred from homology"/>
<keyword id="KW-0963">Cytoplasm</keyword>
<keyword id="KW-0396">Initiation factor</keyword>
<keyword id="KW-0648">Protein biosynthesis</keyword>
<keyword id="KW-1185">Reference proteome</keyword>
<keyword id="KW-0677">Repeat</keyword>
<keyword id="KW-0853">WD repeat</keyword>
<evidence type="ECO:0000255" key="1">
    <source>
        <dbReference type="HAMAP-Rule" id="MF_03008"/>
    </source>
</evidence>
<feature type="chain" id="PRO_0000365373" description="Eukaryotic translation initiation factor 3 subunit I">
    <location>
        <begin position="1"/>
        <end position="348"/>
    </location>
</feature>
<feature type="repeat" description="WD 1">
    <location>
        <begin position="8"/>
        <end position="49"/>
    </location>
</feature>
<feature type="repeat" description="WD 2">
    <location>
        <begin position="51"/>
        <end position="91"/>
    </location>
</feature>
<feature type="repeat" description="WD 3">
    <location>
        <begin position="93"/>
        <end position="135"/>
    </location>
</feature>
<feature type="repeat" description="WD 4">
    <location>
        <begin position="147"/>
        <end position="186"/>
    </location>
</feature>
<feature type="repeat" description="WD 5">
    <location>
        <begin position="196"/>
        <end position="238"/>
    </location>
</feature>
<feature type="repeat" description="WD 6">
    <location>
        <begin position="294"/>
        <end position="333"/>
    </location>
</feature>
<name>EIF3I_PICGU</name>
<gene>
    <name evidence="1" type="primary">TIF34</name>
    <name type="ORF">PGUG_02419</name>
</gene>